<reference key="1">
    <citation type="journal article" date="2006" name="J. Bacteriol.">
        <title>The genome sequence of Methanosphaera stadtmanae reveals why this human intestinal archaeon is restricted to methanol and H2 for methane formation and ATP synthesis.</title>
        <authorList>
            <person name="Fricke W.F."/>
            <person name="Seedorf H."/>
            <person name="Henne A."/>
            <person name="Kruer M."/>
            <person name="Liesegang H."/>
            <person name="Hedderich R."/>
            <person name="Gottschalk G."/>
            <person name="Thauer R.K."/>
        </authorList>
    </citation>
    <scope>NUCLEOTIDE SEQUENCE [LARGE SCALE GENOMIC DNA]</scope>
    <source>
        <strain>ATCC 43021 / DSM 3091 / JCM 11832 / MCB-3</strain>
    </source>
</reference>
<feature type="chain" id="PRO_0000365260" description="DNA ligase">
    <location>
        <begin position="1"/>
        <end position="557"/>
    </location>
</feature>
<feature type="active site" description="N6-AMP-lysine intermediate" evidence="1">
    <location>
        <position position="253"/>
    </location>
</feature>
<feature type="binding site" evidence="1">
    <location>
        <position position="251"/>
    </location>
    <ligand>
        <name>ATP</name>
        <dbReference type="ChEBI" id="CHEBI:30616"/>
    </ligand>
</feature>
<feature type="binding site" evidence="1">
    <location>
        <position position="258"/>
    </location>
    <ligand>
        <name>ATP</name>
        <dbReference type="ChEBI" id="CHEBI:30616"/>
    </ligand>
</feature>
<feature type="binding site" evidence="1">
    <location>
        <position position="273"/>
    </location>
    <ligand>
        <name>ATP</name>
        <dbReference type="ChEBI" id="CHEBI:30616"/>
    </ligand>
</feature>
<feature type="binding site" evidence="1">
    <location>
        <position position="303"/>
    </location>
    <ligand>
        <name>ATP</name>
        <dbReference type="ChEBI" id="CHEBI:30616"/>
    </ligand>
</feature>
<feature type="binding site" evidence="1">
    <location>
        <position position="342"/>
    </location>
    <ligand>
        <name>ATP</name>
        <dbReference type="ChEBI" id="CHEBI:30616"/>
    </ligand>
</feature>
<feature type="binding site" evidence="1">
    <location>
        <position position="418"/>
    </location>
    <ligand>
        <name>ATP</name>
        <dbReference type="ChEBI" id="CHEBI:30616"/>
    </ligand>
</feature>
<feature type="binding site" evidence="1">
    <location>
        <position position="424"/>
    </location>
    <ligand>
        <name>ATP</name>
        <dbReference type="ChEBI" id="CHEBI:30616"/>
    </ligand>
</feature>
<organism>
    <name type="scientific">Methanosphaera stadtmanae (strain ATCC 43021 / DSM 3091 / JCM 11832 / MCB-3)</name>
    <dbReference type="NCBI Taxonomy" id="339860"/>
    <lineage>
        <taxon>Archaea</taxon>
        <taxon>Methanobacteriati</taxon>
        <taxon>Methanobacteriota</taxon>
        <taxon>Methanomada group</taxon>
        <taxon>Methanobacteria</taxon>
        <taxon>Methanobacteriales</taxon>
        <taxon>Methanobacteriaceae</taxon>
        <taxon>Methanosphaera</taxon>
    </lineage>
</organism>
<comment type="function">
    <text evidence="1">DNA ligase that seals nicks in double-stranded DNA during DNA replication, DNA recombination and DNA repair.</text>
</comment>
<comment type="catalytic activity">
    <reaction evidence="1">
        <text>ATP + (deoxyribonucleotide)n-3'-hydroxyl + 5'-phospho-(deoxyribonucleotide)m = (deoxyribonucleotide)n+m + AMP + diphosphate.</text>
        <dbReference type="EC" id="6.5.1.1"/>
    </reaction>
</comment>
<comment type="cofactor">
    <cofactor evidence="1">
        <name>Mg(2+)</name>
        <dbReference type="ChEBI" id="CHEBI:18420"/>
    </cofactor>
</comment>
<comment type="similarity">
    <text evidence="1">Belongs to the ATP-dependent DNA ligase family.</text>
</comment>
<sequence length="557" mass="63359">MTNTSYEKLVEVYEKISSTSSRLEKQDIIADFLMYIKETDADITYDITLLLQGKIFPPWSDKEMGISTQLIIKALSNLLGESTKSIENKLAEVGDMGEISEELIKNNKQVTFFKVPLTVKKVLSNLRKTESITGSKSQNKKINYLLELYTSASPLEAKYITRTITERLRIGVGEGTLVEAIAQAYNIDKEIIDRAYMLSNDLGEVASRAQESIESVKSLTITPGKPIKPMLAQLSPGIKESITEMKKVICETKYDGIRVQIHHYNNKTKIFTRRLENVTNALPEVVEYIEEALPSKDFIVEGEVIATKDNKPISFQYILQRVKRKYDIDKMREKIPLKVFLFDVLYYDKPTAELPIIQRRQLLEEIVTTSKNVELSTMKIVSQENYTEAEKLFTWSIDEGHEGIMFKDVTSPYSPGKRGKNMLKYKPLRETLDCVITGGTYGKGKRAKFFGSYLLSLLDEKTGEYKTLVHAATGMDDDLLASLTKRMEKLIISKSEQNVLFKPKVILEIAYSEIVESNEYESGYSLRFPAIKGVRDDIGLDEVDTLSKLHQMIDLQK</sequence>
<accession>Q2NHF9</accession>
<gene>
    <name evidence="1" type="primary">lig</name>
    <name type="ordered locus">Msp_0258</name>
</gene>
<protein>
    <recommendedName>
        <fullName evidence="1">DNA ligase</fullName>
        <ecNumber evidence="1">6.5.1.1</ecNumber>
    </recommendedName>
    <alternativeName>
        <fullName evidence="1">Polydeoxyribonucleotide synthase [ATP]</fullName>
    </alternativeName>
</protein>
<name>DNLI_METST</name>
<dbReference type="EC" id="6.5.1.1" evidence="1"/>
<dbReference type="EMBL" id="CP000102">
    <property type="protein sequence ID" value="ABC56674.1"/>
    <property type="molecule type" value="Genomic_DNA"/>
</dbReference>
<dbReference type="RefSeq" id="WP_011405874.1">
    <property type="nucleotide sequence ID" value="NC_007681.1"/>
</dbReference>
<dbReference type="SMR" id="Q2NHF9"/>
<dbReference type="STRING" id="339860.Msp_0258"/>
<dbReference type="KEGG" id="mst:Msp_0258"/>
<dbReference type="eggNOG" id="arCOG01347">
    <property type="taxonomic scope" value="Archaea"/>
</dbReference>
<dbReference type="HOGENOM" id="CLU_005138_6_0_2"/>
<dbReference type="OrthoDB" id="31274at2157"/>
<dbReference type="Proteomes" id="UP000001931">
    <property type="component" value="Chromosome"/>
</dbReference>
<dbReference type="GO" id="GO:0005524">
    <property type="term" value="F:ATP binding"/>
    <property type="evidence" value="ECO:0007669"/>
    <property type="project" value="UniProtKB-UniRule"/>
</dbReference>
<dbReference type="GO" id="GO:0003677">
    <property type="term" value="F:DNA binding"/>
    <property type="evidence" value="ECO:0007669"/>
    <property type="project" value="InterPro"/>
</dbReference>
<dbReference type="GO" id="GO:0003910">
    <property type="term" value="F:DNA ligase (ATP) activity"/>
    <property type="evidence" value="ECO:0007669"/>
    <property type="project" value="UniProtKB-UniRule"/>
</dbReference>
<dbReference type="GO" id="GO:0046872">
    <property type="term" value="F:metal ion binding"/>
    <property type="evidence" value="ECO:0007669"/>
    <property type="project" value="UniProtKB-KW"/>
</dbReference>
<dbReference type="GO" id="GO:0051301">
    <property type="term" value="P:cell division"/>
    <property type="evidence" value="ECO:0007669"/>
    <property type="project" value="UniProtKB-KW"/>
</dbReference>
<dbReference type="GO" id="GO:0071897">
    <property type="term" value="P:DNA biosynthetic process"/>
    <property type="evidence" value="ECO:0007669"/>
    <property type="project" value="InterPro"/>
</dbReference>
<dbReference type="GO" id="GO:0006310">
    <property type="term" value="P:DNA recombination"/>
    <property type="evidence" value="ECO:0007669"/>
    <property type="project" value="UniProtKB-UniRule"/>
</dbReference>
<dbReference type="GO" id="GO:0006281">
    <property type="term" value="P:DNA repair"/>
    <property type="evidence" value="ECO:0007669"/>
    <property type="project" value="UniProtKB-UniRule"/>
</dbReference>
<dbReference type="GO" id="GO:0006273">
    <property type="term" value="P:lagging strand elongation"/>
    <property type="evidence" value="ECO:0007669"/>
    <property type="project" value="TreeGrafter"/>
</dbReference>
<dbReference type="CDD" id="cd07901">
    <property type="entry name" value="Adenylation_DNA_ligase_Arch_LigB"/>
    <property type="match status" value="1"/>
</dbReference>
<dbReference type="CDD" id="cd07972">
    <property type="entry name" value="OBF_DNA_ligase_Arch_LigB"/>
    <property type="match status" value="1"/>
</dbReference>
<dbReference type="FunFam" id="1.10.3260.10:FF:000007">
    <property type="entry name" value="DNA ligase"/>
    <property type="match status" value="1"/>
</dbReference>
<dbReference type="FunFam" id="3.30.470.30:FF:000012">
    <property type="entry name" value="Probable DNA ligase"/>
    <property type="match status" value="1"/>
</dbReference>
<dbReference type="Gene3D" id="1.10.3260.10">
    <property type="entry name" value="DNA ligase, ATP-dependent, N-terminal domain"/>
    <property type="match status" value="1"/>
</dbReference>
<dbReference type="Gene3D" id="3.30.470.30">
    <property type="entry name" value="DNA ligase/mRNA capping enzyme"/>
    <property type="match status" value="1"/>
</dbReference>
<dbReference type="Gene3D" id="2.40.50.140">
    <property type="entry name" value="Nucleic acid-binding proteins"/>
    <property type="match status" value="1"/>
</dbReference>
<dbReference type="HAMAP" id="MF_00407">
    <property type="entry name" value="DNA_ligase"/>
    <property type="match status" value="1"/>
</dbReference>
<dbReference type="InterPro" id="IPR050191">
    <property type="entry name" value="ATP-dep_DNA_ligase"/>
</dbReference>
<dbReference type="InterPro" id="IPR022865">
    <property type="entry name" value="DNA_ligae_ATP-dep_bac/arc"/>
</dbReference>
<dbReference type="InterPro" id="IPR000977">
    <property type="entry name" value="DNA_ligase_ATP-dep"/>
</dbReference>
<dbReference type="InterPro" id="IPR012309">
    <property type="entry name" value="DNA_ligase_ATP-dep_C"/>
</dbReference>
<dbReference type="InterPro" id="IPR012310">
    <property type="entry name" value="DNA_ligase_ATP-dep_cent"/>
</dbReference>
<dbReference type="InterPro" id="IPR016059">
    <property type="entry name" value="DNA_ligase_ATP-dep_CS"/>
</dbReference>
<dbReference type="InterPro" id="IPR012308">
    <property type="entry name" value="DNA_ligase_ATP-dep_N"/>
</dbReference>
<dbReference type="InterPro" id="IPR036599">
    <property type="entry name" value="DNA_ligase_N_sf"/>
</dbReference>
<dbReference type="InterPro" id="IPR012340">
    <property type="entry name" value="NA-bd_OB-fold"/>
</dbReference>
<dbReference type="NCBIfam" id="TIGR00574">
    <property type="entry name" value="dnl1"/>
    <property type="match status" value="1"/>
</dbReference>
<dbReference type="PANTHER" id="PTHR45674:SF7">
    <property type="entry name" value="DNA LIGASE"/>
    <property type="match status" value="1"/>
</dbReference>
<dbReference type="PANTHER" id="PTHR45674">
    <property type="entry name" value="DNA LIGASE 1/3 FAMILY MEMBER"/>
    <property type="match status" value="1"/>
</dbReference>
<dbReference type="Pfam" id="PF04679">
    <property type="entry name" value="DNA_ligase_A_C"/>
    <property type="match status" value="1"/>
</dbReference>
<dbReference type="Pfam" id="PF01068">
    <property type="entry name" value="DNA_ligase_A_M"/>
    <property type="match status" value="1"/>
</dbReference>
<dbReference type="Pfam" id="PF04675">
    <property type="entry name" value="DNA_ligase_A_N"/>
    <property type="match status" value="1"/>
</dbReference>
<dbReference type="SUPFAM" id="SSF117018">
    <property type="entry name" value="ATP-dependent DNA ligase DNA-binding domain"/>
    <property type="match status" value="1"/>
</dbReference>
<dbReference type="SUPFAM" id="SSF56091">
    <property type="entry name" value="DNA ligase/mRNA capping enzyme, catalytic domain"/>
    <property type="match status" value="1"/>
</dbReference>
<dbReference type="SUPFAM" id="SSF50249">
    <property type="entry name" value="Nucleic acid-binding proteins"/>
    <property type="match status" value="1"/>
</dbReference>
<dbReference type="PROSITE" id="PS00697">
    <property type="entry name" value="DNA_LIGASE_A1"/>
    <property type="match status" value="1"/>
</dbReference>
<dbReference type="PROSITE" id="PS50160">
    <property type="entry name" value="DNA_LIGASE_A3"/>
    <property type="match status" value="1"/>
</dbReference>
<keyword id="KW-0067">ATP-binding</keyword>
<keyword id="KW-0131">Cell cycle</keyword>
<keyword id="KW-0132">Cell division</keyword>
<keyword id="KW-0227">DNA damage</keyword>
<keyword id="KW-0233">DNA recombination</keyword>
<keyword id="KW-0234">DNA repair</keyword>
<keyword id="KW-0235">DNA replication</keyword>
<keyword id="KW-0436">Ligase</keyword>
<keyword id="KW-0460">Magnesium</keyword>
<keyword id="KW-0479">Metal-binding</keyword>
<keyword id="KW-0547">Nucleotide-binding</keyword>
<keyword id="KW-1185">Reference proteome</keyword>
<proteinExistence type="inferred from homology"/>
<evidence type="ECO:0000255" key="1">
    <source>
        <dbReference type="HAMAP-Rule" id="MF_00407"/>
    </source>
</evidence>